<feature type="chain" id="PRO_0000433208" description="Recombination directionality factor">
    <location>
        <begin position="1"/>
        <end position="244"/>
    </location>
</feature>
<feature type="region of interest" description="Disordered" evidence="1">
    <location>
        <begin position="1"/>
        <end position="34"/>
    </location>
</feature>
<feature type="compositionally biased region" description="Basic and acidic residues" evidence="1">
    <location>
        <begin position="11"/>
        <end position="27"/>
    </location>
</feature>
<sequence>MAKRSIWAGDEDNKPKKRETYADDTVGRFHSGYSETNERGKVVPVALDKWRISTGEQSVADAVAQLFGGTPVENEESTSENFIDVFTDRPKVPVIIEADGIHWDMKLWLNGKLKHHCDGFDFVSHADEEMIGQPCGCPKLFDERKAAAKEYDAPNPAITVTFTLADDPELGRFKFQTGSWTLFKVLHEAEDDVERVGKGGAVLANLELELVEYTPKRGPMRNKLVSYYKPTITVLKSYNDAIAD</sequence>
<evidence type="ECO:0000256" key="1">
    <source>
        <dbReference type="SAM" id="MobiDB-lite"/>
    </source>
</evidence>
<evidence type="ECO:0000269" key="2">
    <source>
    </source>
</evidence>
<evidence type="ECO:0000305" key="3"/>
<evidence type="ECO:0000312" key="4">
    <source>
        <dbReference type="EMBL" id="AFR23342.1"/>
    </source>
</evidence>
<evidence type="ECO:0000312" key="5">
    <source>
        <dbReference type="EMBL" id="CAA07127.2"/>
    </source>
</evidence>
<evidence type="ECO:0000312" key="6">
    <source>
        <dbReference type="Proteomes" id="UP000002124"/>
    </source>
</evidence>
<name>RDF_BPPHC</name>
<protein>
    <recommendedName>
        <fullName evidence="3">Recombination directionality factor</fullName>
        <shortName>RDF</shortName>
    </recommendedName>
    <alternativeName>
        <fullName evidence="3">Gene product 3</fullName>
        <shortName>gp3</shortName>
    </alternativeName>
</protein>
<dbReference type="EMBL" id="JX120614">
    <property type="protein sequence ID" value="AFR23342.1"/>
    <property type="molecule type" value="Genomic_DNA"/>
</dbReference>
<dbReference type="EMBL" id="AJ006589">
    <property type="protein sequence ID" value="CAA07127.2"/>
    <property type="molecule type" value="Genomic_DNA"/>
</dbReference>
<dbReference type="RefSeq" id="NP_047948.2">
    <property type="nucleotide sequence ID" value="NC_001978.3"/>
</dbReference>
<dbReference type="GeneID" id="2715894"/>
<dbReference type="KEGG" id="vg:2715894"/>
<dbReference type="OrthoDB" id="11807at10239"/>
<dbReference type="Proteomes" id="UP000002124">
    <property type="component" value="Genome"/>
</dbReference>
<dbReference type="GO" id="GO:0032359">
    <property type="term" value="P:provirus excision"/>
    <property type="evidence" value="ECO:0007669"/>
    <property type="project" value="UniProtKB-KW"/>
</dbReference>
<dbReference type="InterPro" id="IPR043991">
    <property type="entry name" value="Gp3-like"/>
</dbReference>
<dbReference type="Pfam" id="PF18897">
    <property type="entry name" value="Gp3-like"/>
    <property type="match status" value="1"/>
</dbReference>
<proteinExistence type="evidence at protein level"/>
<keyword id="KW-1185">Reference proteome</keyword>
<keyword id="KW-1250">Viral genome excision</keyword>
<accession>Q9T216</accession>
<organismHost>
    <name type="scientific">Streptomyces coelicolor</name>
    <dbReference type="NCBI Taxonomy" id="1902"/>
</organismHost>
<comment type="function">
    <text evidence="2">Recombination directionality factor that interacts directly with the integrase tetramer to activate excision and inhibit integration.</text>
</comment>
<comment type="subunit">
    <text evidence="2">Interacts with the integrase.</text>
</comment>
<comment type="induction">
    <text evidence="2">Expressed early in the viral replication cycle.</text>
</comment>
<reference key="1">
    <citation type="journal article" date="1999" name="Nucleic Acids Res.">
        <title>The complete genome sequence of the Streptomyces temperate phage straight phiC31: evolutionary relationships to other viruses.</title>
        <authorList>
            <person name="Smith M.C."/>
            <person name="Burns R.N."/>
            <person name="Wilson S.E."/>
            <person name="Gregory M.A."/>
        </authorList>
    </citation>
    <scope>NUCLEOTIDE SEQUENCE [GENOMIC DNA]</scope>
    <source>
        <strain evidence="5">Norwich stock</strain>
    </source>
</reference>
<reference key="2">
    <citation type="journal article" date="1999" name="Proc. Natl. Acad. Sci. U.S.A.">
        <title>Evolutionary relationships among diverse bacteriophages and prophages: all the world's a phage.</title>
        <authorList>
            <person name="Hendrix R.W."/>
            <person name="Smith M.C.M."/>
            <person name="Burns N."/>
            <person name="Ford M.E."/>
            <person name="Hatfull G.F."/>
        </authorList>
    </citation>
    <scope>NUCLEOTIDE SEQUENCE [LARGE SCALE GENOMIC DNA]</scope>
    <source>
        <strain evidence="5">Norwich stock</strain>
    </source>
</reference>
<reference key="3">
    <citation type="journal article" date="2012" name="Biotechnol. J.">
        <title>Efficient reversal of phiC31 integrase recombination in mammalian cells.</title>
        <authorList>
            <person name="Farruggio A.P."/>
            <person name="Chavez C.L."/>
            <person name="Mikell C.L."/>
            <person name="Calos M.P."/>
        </authorList>
    </citation>
    <scope>NUCLEOTIDE SEQUENCE [GENOMIC DNA]</scope>
</reference>
<reference evidence="5" key="4">
    <citation type="submission" date="2012-06" db="EMBL/GenBank/DDBJ databases">
        <authorList>
            <person name="Smith M.C.M."/>
        </authorList>
    </citation>
    <scope>NUCLEOTIDE SEQUENCE [GENOMIC DNA]</scope>
    <source>
        <strain evidence="5">Norwich stock</strain>
    </source>
</reference>
<reference key="5">
    <citation type="journal article" date="2011" name="Mol. Microbiol.">
        <title>A phage protein that binds phiC31 integrase to switch its directionality.</title>
        <authorList>
            <person name="Khaleel T."/>
            <person name="Younger E."/>
            <person name="McEwan A.R."/>
            <person name="Varghese A.S."/>
            <person name="Smith M.C."/>
        </authorList>
    </citation>
    <scope>FUNCTION</scope>
    <scope>INTERACTION WITH INTEGRASE</scope>
    <scope>INDUCTION</scope>
</reference>
<gene>
    <name evidence="5" type="primary">3</name>
    <name evidence="4" type="synonym">rdf</name>
</gene>
<organism evidence="6">
    <name type="scientific">Streptomyces phage phiC31</name>
    <name type="common">Bacteriophage phi-C31</name>
    <dbReference type="NCBI Taxonomy" id="10719"/>
    <lineage>
        <taxon>Viruses</taxon>
        <taxon>Duplodnaviria</taxon>
        <taxon>Heunggongvirae</taxon>
        <taxon>Uroviricota</taxon>
        <taxon>Caudoviricetes</taxon>
        <taxon>Lomovskayavirus</taxon>
    </lineage>
</organism>